<keyword id="KW-0963">Cytoplasm</keyword>
<keyword id="KW-0396">Initiation factor</keyword>
<keyword id="KW-0648">Protein biosynthesis</keyword>
<keyword id="KW-0694">RNA-binding</keyword>
<keyword id="KW-0699">rRNA-binding</keyword>
<comment type="function">
    <text evidence="1">One of the essential components for the initiation of protein synthesis. Stabilizes the binding of IF-2 and IF-3 on the 30S subunit to which N-formylmethionyl-tRNA(fMet) subsequently binds. Helps modulate mRNA selection, yielding the 30S pre-initiation complex (PIC). Upon addition of the 50S ribosomal subunit IF-1, IF-2 and IF-3 are released leaving the mature 70S translation initiation complex.</text>
</comment>
<comment type="subunit">
    <text evidence="1">Component of the 30S ribosomal translation pre-initiation complex which assembles on the 30S ribosome in the order IF-2 and IF-3, IF-1 and N-formylmethionyl-tRNA(fMet); mRNA recruitment can occur at any time during PIC assembly.</text>
</comment>
<comment type="subcellular location">
    <subcellularLocation>
        <location evidence="1">Cytoplasm</location>
    </subcellularLocation>
</comment>
<comment type="similarity">
    <text evidence="1">Belongs to the IF-1 family.</text>
</comment>
<gene>
    <name evidence="1" type="primary">infA</name>
    <name type="ordered locus">SSU05_0092</name>
</gene>
<protein>
    <recommendedName>
        <fullName evidence="1">Translation initiation factor IF-1</fullName>
    </recommendedName>
</protein>
<dbReference type="EMBL" id="CP000407">
    <property type="protein sequence ID" value="ABP89064.1"/>
    <property type="molecule type" value="Genomic_DNA"/>
</dbReference>
<dbReference type="SMR" id="A4VSH5"/>
<dbReference type="STRING" id="391295.SSU05_0092"/>
<dbReference type="KEGG" id="ssu:SSU05_0092"/>
<dbReference type="eggNOG" id="COG0361">
    <property type="taxonomic scope" value="Bacteria"/>
</dbReference>
<dbReference type="HOGENOM" id="CLU_151267_1_0_9"/>
<dbReference type="GO" id="GO:0005829">
    <property type="term" value="C:cytosol"/>
    <property type="evidence" value="ECO:0007669"/>
    <property type="project" value="TreeGrafter"/>
</dbReference>
<dbReference type="GO" id="GO:0043022">
    <property type="term" value="F:ribosome binding"/>
    <property type="evidence" value="ECO:0007669"/>
    <property type="project" value="UniProtKB-UniRule"/>
</dbReference>
<dbReference type="GO" id="GO:0019843">
    <property type="term" value="F:rRNA binding"/>
    <property type="evidence" value="ECO:0007669"/>
    <property type="project" value="UniProtKB-UniRule"/>
</dbReference>
<dbReference type="GO" id="GO:0003743">
    <property type="term" value="F:translation initiation factor activity"/>
    <property type="evidence" value="ECO:0007669"/>
    <property type="project" value="UniProtKB-UniRule"/>
</dbReference>
<dbReference type="CDD" id="cd04451">
    <property type="entry name" value="S1_IF1"/>
    <property type="match status" value="1"/>
</dbReference>
<dbReference type="FunFam" id="2.40.50.140:FF:000002">
    <property type="entry name" value="Translation initiation factor IF-1"/>
    <property type="match status" value="1"/>
</dbReference>
<dbReference type="Gene3D" id="2.40.50.140">
    <property type="entry name" value="Nucleic acid-binding proteins"/>
    <property type="match status" value="1"/>
</dbReference>
<dbReference type="HAMAP" id="MF_00075">
    <property type="entry name" value="IF_1"/>
    <property type="match status" value="1"/>
</dbReference>
<dbReference type="InterPro" id="IPR012340">
    <property type="entry name" value="NA-bd_OB-fold"/>
</dbReference>
<dbReference type="InterPro" id="IPR006196">
    <property type="entry name" value="RNA-binding_domain_S1_IF1"/>
</dbReference>
<dbReference type="InterPro" id="IPR003029">
    <property type="entry name" value="S1_domain"/>
</dbReference>
<dbReference type="InterPro" id="IPR004368">
    <property type="entry name" value="TIF_IF1"/>
</dbReference>
<dbReference type="NCBIfam" id="TIGR00008">
    <property type="entry name" value="infA"/>
    <property type="match status" value="1"/>
</dbReference>
<dbReference type="PANTHER" id="PTHR33370">
    <property type="entry name" value="TRANSLATION INITIATION FACTOR IF-1, CHLOROPLASTIC"/>
    <property type="match status" value="1"/>
</dbReference>
<dbReference type="PANTHER" id="PTHR33370:SF1">
    <property type="entry name" value="TRANSLATION INITIATION FACTOR IF-1, CHLOROPLASTIC"/>
    <property type="match status" value="1"/>
</dbReference>
<dbReference type="Pfam" id="PF01176">
    <property type="entry name" value="eIF-1a"/>
    <property type="match status" value="1"/>
</dbReference>
<dbReference type="SMART" id="SM00316">
    <property type="entry name" value="S1"/>
    <property type="match status" value="1"/>
</dbReference>
<dbReference type="SUPFAM" id="SSF50249">
    <property type="entry name" value="Nucleic acid-binding proteins"/>
    <property type="match status" value="1"/>
</dbReference>
<dbReference type="PROSITE" id="PS50832">
    <property type="entry name" value="S1_IF1_TYPE"/>
    <property type="match status" value="1"/>
</dbReference>
<name>IF1_STRSY</name>
<sequence>MAKEDVIEIEGKVVDTMPNAMFTVELENGHQVLATVSGKIRKNYIRILVGDRVTVELSPYDLTRGRITYRFK</sequence>
<feature type="chain" id="PRO_0000338938" description="Translation initiation factor IF-1">
    <location>
        <begin position="1"/>
        <end position="72"/>
    </location>
</feature>
<feature type="domain" description="S1-like" evidence="1">
    <location>
        <begin position="1"/>
        <end position="72"/>
    </location>
</feature>
<evidence type="ECO:0000255" key="1">
    <source>
        <dbReference type="HAMAP-Rule" id="MF_00075"/>
    </source>
</evidence>
<reference key="1">
    <citation type="journal article" date="2007" name="PLoS ONE">
        <title>A glimpse of streptococcal toxic shock syndrome from comparative genomics of S. suis 2 Chinese isolates.</title>
        <authorList>
            <person name="Chen C."/>
            <person name="Tang J."/>
            <person name="Dong W."/>
            <person name="Wang C."/>
            <person name="Feng Y."/>
            <person name="Wang J."/>
            <person name="Zheng F."/>
            <person name="Pan X."/>
            <person name="Liu D."/>
            <person name="Li M."/>
            <person name="Song Y."/>
            <person name="Zhu X."/>
            <person name="Sun H."/>
            <person name="Feng T."/>
            <person name="Guo Z."/>
            <person name="Ju A."/>
            <person name="Ge J."/>
            <person name="Dong Y."/>
            <person name="Sun W."/>
            <person name="Jiang Y."/>
            <person name="Wang J."/>
            <person name="Yan J."/>
            <person name="Yang H."/>
            <person name="Wang X."/>
            <person name="Gao G.F."/>
            <person name="Yang R."/>
            <person name="Wang J."/>
            <person name="Yu J."/>
        </authorList>
    </citation>
    <scope>NUCLEOTIDE SEQUENCE [LARGE SCALE GENOMIC DNA]</scope>
    <source>
        <strain>05ZYH33</strain>
    </source>
</reference>
<accession>A4VSH5</accession>
<proteinExistence type="inferred from homology"/>
<organism>
    <name type="scientific">Streptococcus suis (strain 05ZYH33)</name>
    <dbReference type="NCBI Taxonomy" id="391295"/>
    <lineage>
        <taxon>Bacteria</taxon>
        <taxon>Bacillati</taxon>
        <taxon>Bacillota</taxon>
        <taxon>Bacilli</taxon>
        <taxon>Lactobacillales</taxon>
        <taxon>Streptococcaceae</taxon>
        <taxon>Streptococcus</taxon>
    </lineage>
</organism>